<evidence type="ECO:0000250" key="1"/>
<evidence type="ECO:0000255" key="2">
    <source>
        <dbReference type="PROSITE-ProRule" id="PRU00171"/>
    </source>
</evidence>
<evidence type="ECO:0000256" key="3">
    <source>
        <dbReference type="SAM" id="MobiDB-lite"/>
    </source>
</evidence>
<evidence type="ECO:0000269" key="4">
    <source>
    </source>
</evidence>
<evidence type="ECO:0000269" key="5">
    <source>
    </source>
</evidence>
<evidence type="ECO:0000269" key="6">
    <source>
    </source>
</evidence>
<evidence type="ECO:0000269" key="7">
    <source ref="1"/>
</evidence>
<evidence type="ECO:0000305" key="8"/>
<name>RGS20_MOUSE</name>
<organism>
    <name type="scientific">Mus musculus</name>
    <name type="common">Mouse</name>
    <dbReference type="NCBI Taxonomy" id="10090"/>
    <lineage>
        <taxon>Eukaryota</taxon>
        <taxon>Metazoa</taxon>
        <taxon>Chordata</taxon>
        <taxon>Craniata</taxon>
        <taxon>Vertebrata</taxon>
        <taxon>Euteleostomi</taxon>
        <taxon>Mammalia</taxon>
        <taxon>Eutheria</taxon>
        <taxon>Euarchontoglires</taxon>
        <taxon>Glires</taxon>
        <taxon>Rodentia</taxon>
        <taxon>Myomorpha</taxon>
        <taxon>Muroidea</taxon>
        <taxon>Muridae</taxon>
        <taxon>Murinae</taxon>
        <taxon>Mus</taxon>
        <taxon>Mus</taxon>
    </lineage>
</organism>
<protein>
    <recommendedName>
        <fullName>Regulator of G-protein signaling 20</fullName>
        <shortName>RGS20</shortName>
    </recommendedName>
    <alternativeName>
        <fullName>Regulator of G-protein signaling Z1</fullName>
    </alternativeName>
</protein>
<proteinExistence type="evidence at protein level"/>
<sequence length="239" mass="26986">MRTANGGPRARASPSASPADPGLPEGSERTEMRMRQMCGGSETQGPAPSQQGGRGSNACCFCWCCCCTCSCLTVRNQEDQRPQRASHEIRTDIPACEESPTPTLEEVCAWAQSFDNLMVTPAGRNAFREFLRTEFSEENMLFWMACEELKREANKSTIEEKARIIYEDYISILSPKEVSLDSRVREVINRNMVDPSQHIFDDAQLQIYTLMHRDSYPRFMNSTVYKDLLTSLAEKTVEA</sequence>
<comment type="function">
    <text evidence="4 5 6">Inhibits signal transduction by increasing the GTPase activity of G protein alpha subunits thereby driving them into their inactive GDP-bound form. Binds selectively to G(z)-alpha and G(alpha)-i2 subunits, accelerates their GTPase activity and regulates their signaling activities. The G(z)-alpha activity is inhibited by the phosphorylation and palmitoylation of the G-protein. Negatively regulates mu-opioid receptor-mediated activation of the G-proteins.</text>
</comment>
<comment type="subunit">
    <text evidence="1">Forms a complex with G(alpha)z/i2 subunits and mu-opioid receptors; the formation of this complex results in mu-opioid receptor desensitization. Interacts with OPRM1 (By similarity).</text>
</comment>
<comment type="subcellular location">
    <subcellularLocation>
        <location>Membrane</location>
        <topology>Lipid-anchor</topology>
    </subcellularLocation>
    <subcellularLocation>
        <location>Nucleus</location>
    </subcellularLocation>
    <subcellularLocation>
        <location>Cytoplasm</location>
    </subcellularLocation>
    <text evidence="1">Shuttles between the cytoplasm/cell membrane and the nucleus Anchored to the membrane through palmitoylation.</text>
</comment>
<comment type="PTM">
    <text evidence="1">Fatty acylated. Heavily palmitoylated in the cysteine string motif (By similarity).</text>
</comment>
<comment type="PTM">
    <text evidence="4">N- and O-glycosylated in synapsomal membranes.</text>
</comment>
<comment type="PTM">
    <text evidence="6">Serine phosphorylated in synapsomal membranes.</text>
</comment>
<comment type="PTM">
    <text evidence="6">Sumoylated with SUMO1, SUMO2 and SUMO3. Sumoylation increases binding to the G-proteins, G(alpha)-i2 and G(z), and interaction with mu-opioid receptors.</text>
</comment>
<comment type="sequence caution" evidence="8">
    <conflict type="erroneous initiation">
        <sequence resource="EMBL-CDS" id="BAB28987"/>
    </conflict>
</comment>
<reference key="1">
    <citation type="submission" date="1999-10" db="EMBL/GenBank/DDBJ databases">
        <title>A mouse ortholog of RGSZ1.</title>
        <authorList>
            <person name="Barker S.A."/>
            <person name="Wang J."/>
            <person name="Ross E.M."/>
        </authorList>
    </citation>
    <scope>NUCLEOTIDE SEQUENCE [MRNA]</scope>
    <scope>VARIANT ARG-32</scope>
    <source>
        <strain>129/B6</strain>
        <strain>BALB/cJ</strain>
    </source>
</reference>
<reference key="2">
    <citation type="journal article" date="2005" name="Science">
        <title>The transcriptional landscape of the mammalian genome.</title>
        <authorList>
            <person name="Carninci P."/>
            <person name="Kasukawa T."/>
            <person name="Katayama S."/>
            <person name="Gough J."/>
            <person name="Frith M.C."/>
            <person name="Maeda N."/>
            <person name="Oyama R."/>
            <person name="Ravasi T."/>
            <person name="Lenhard B."/>
            <person name="Wells C."/>
            <person name="Kodzius R."/>
            <person name="Shimokawa K."/>
            <person name="Bajic V.B."/>
            <person name="Brenner S.E."/>
            <person name="Batalov S."/>
            <person name="Forrest A.R."/>
            <person name="Zavolan M."/>
            <person name="Davis M.J."/>
            <person name="Wilming L.G."/>
            <person name="Aidinis V."/>
            <person name="Allen J.E."/>
            <person name="Ambesi-Impiombato A."/>
            <person name="Apweiler R."/>
            <person name="Aturaliya R.N."/>
            <person name="Bailey T.L."/>
            <person name="Bansal M."/>
            <person name="Baxter L."/>
            <person name="Beisel K.W."/>
            <person name="Bersano T."/>
            <person name="Bono H."/>
            <person name="Chalk A.M."/>
            <person name="Chiu K.P."/>
            <person name="Choudhary V."/>
            <person name="Christoffels A."/>
            <person name="Clutterbuck D.R."/>
            <person name="Crowe M.L."/>
            <person name="Dalla E."/>
            <person name="Dalrymple B.P."/>
            <person name="de Bono B."/>
            <person name="Della Gatta G."/>
            <person name="di Bernardo D."/>
            <person name="Down T."/>
            <person name="Engstrom P."/>
            <person name="Fagiolini M."/>
            <person name="Faulkner G."/>
            <person name="Fletcher C.F."/>
            <person name="Fukushima T."/>
            <person name="Furuno M."/>
            <person name="Futaki S."/>
            <person name="Gariboldi M."/>
            <person name="Georgii-Hemming P."/>
            <person name="Gingeras T.R."/>
            <person name="Gojobori T."/>
            <person name="Green R.E."/>
            <person name="Gustincich S."/>
            <person name="Harbers M."/>
            <person name="Hayashi Y."/>
            <person name="Hensch T.K."/>
            <person name="Hirokawa N."/>
            <person name="Hill D."/>
            <person name="Huminiecki L."/>
            <person name="Iacono M."/>
            <person name="Ikeo K."/>
            <person name="Iwama A."/>
            <person name="Ishikawa T."/>
            <person name="Jakt M."/>
            <person name="Kanapin A."/>
            <person name="Katoh M."/>
            <person name="Kawasawa Y."/>
            <person name="Kelso J."/>
            <person name="Kitamura H."/>
            <person name="Kitano H."/>
            <person name="Kollias G."/>
            <person name="Krishnan S.P."/>
            <person name="Kruger A."/>
            <person name="Kummerfeld S.K."/>
            <person name="Kurochkin I.V."/>
            <person name="Lareau L.F."/>
            <person name="Lazarevic D."/>
            <person name="Lipovich L."/>
            <person name="Liu J."/>
            <person name="Liuni S."/>
            <person name="McWilliam S."/>
            <person name="Madan Babu M."/>
            <person name="Madera M."/>
            <person name="Marchionni L."/>
            <person name="Matsuda H."/>
            <person name="Matsuzawa S."/>
            <person name="Miki H."/>
            <person name="Mignone F."/>
            <person name="Miyake S."/>
            <person name="Morris K."/>
            <person name="Mottagui-Tabar S."/>
            <person name="Mulder N."/>
            <person name="Nakano N."/>
            <person name="Nakauchi H."/>
            <person name="Ng P."/>
            <person name="Nilsson R."/>
            <person name="Nishiguchi S."/>
            <person name="Nishikawa S."/>
            <person name="Nori F."/>
            <person name="Ohara O."/>
            <person name="Okazaki Y."/>
            <person name="Orlando V."/>
            <person name="Pang K.C."/>
            <person name="Pavan W.J."/>
            <person name="Pavesi G."/>
            <person name="Pesole G."/>
            <person name="Petrovsky N."/>
            <person name="Piazza S."/>
            <person name="Reed J."/>
            <person name="Reid J.F."/>
            <person name="Ring B.Z."/>
            <person name="Ringwald M."/>
            <person name="Rost B."/>
            <person name="Ruan Y."/>
            <person name="Salzberg S.L."/>
            <person name="Sandelin A."/>
            <person name="Schneider C."/>
            <person name="Schoenbach C."/>
            <person name="Sekiguchi K."/>
            <person name="Semple C.A."/>
            <person name="Seno S."/>
            <person name="Sessa L."/>
            <person name="Sheng Y."/>
            <person name="Shibata Y."/>
            <person name="Shimada H."/>
            <person name="Shimada K."/>
            <person name="Silva D."/>
            <person name="Sinclair B."/>
            <person name="Sperling S."/>
            <person name="Stupka E."/>
            <person name="Sugiura K."/>
            <person name="Sultana R."/>
            <person name="Takenaka Y."/>
            <person name="Taki K."/>
            <person name="Tammoja K."/>
            <person name="Tan S.L."/>
            <person name="Tang S."/>
            <person name="Taylor M.S."/>
            <person name="Tegner J."/>
            <person name="Teichmann S.A."/>
            <person name="Ueda H.R."/>
            <person name="van Nimwegen E."/>
            <person name="Verardo R."/>
            <person name="Wei C.L."/>
            <person name="Yagi K."/>
            <person name="Yamanishi H."/>
            <person name="Zabarovsky E."/>
            <person name="Zhu S."/>
            <person name="Zimmer A."/>
            <person name="Hide W."/>
            <person name="Bult C."/>
            <person name="Grimmond S.M."/>
            <person name="Teasdale R.D."/>
            <person name="Liu E.T."/>
            <person name="Brusic V."/>
            <person name="Quackenbush J."/>
            <person name="Wahlestedt C."/>
            <person name="Mattick J.S."/>
            <person name="Hume D.A."/>
            <person name="Kai C."/>
            <person name="Sasaki D."/>
            <person name="Tomaru Y."/>
            <person name="Fukuda S."/>
            <person name="Kanamori-Katayama M."/>
            <person name="Suzuki M."/>
            <person name="Aoki J."/>
            <person name="Arakawa T."/>
            <person name="Iida J."/>
            <person name="Imamura K."/>
            <person name="Itoh M."/>
            <person name="Kato T."/>
            <person name="Kawaji H."/>
            <person name="Kawagashira N."/>
            <person name="Kawashima T."/>
            <person name="Kojima M."/>
            <person name="Kondo S."/>
            <person name="Konno H."/>
            <person name="Nakano K."/>
            <person name="Ninomiya N."/>
            <person name="Nishio T."/>
            <person name="Okada M."/>
            <person name="Plessy C."/>
            <person name="Shibata K."/>
            <person name="Shiraki T."/>
            <person name="Suzuki S."/>
            <person name="Tagami M."/>
            <person name="Waki K."/>
            <person name="Watahiki A."/>
            <person name="Okamura-Oho Y."/>
            <person name="Suzuki H."/>
            <person name="Kawai J."/>
            <person name="Hayashizaki Y."/>
        </authorList>
    </citation>
    <scope>NUCLEOTIDE SEQUENCE [LARGE SCALE MRNA]</scope>
    <source>
        <strain>C57BL/6J</strain>
        <tissue>Hippocampus</tissue>
        <tissue>Visual cortex</tissue>
    </source>
</reference>
<reference key="3">
    <citation type="journal article" date="2004" name="Genome Res.">
        <title>The status, quality, and expansion of the NIH full-length cDNA project: the Mammalian Gene Collection (MGC).</title>
        <authorList>
            <consortium name="The MGC Project Team"/>
        </authorList>
    </citation>
    <scope>NUCLEOTIDE SEQUENCE [LARGE SCALE MRNA]</scope>
    <source>
        <tissue>Brain</tissue>
    </source>
</reference>
<reference key="4">
    <citation type="journal article" date="2004" name="Neuropsychopharmacology">
        <title>RGSZ1 and GAIP regulate mu- but not delta-opioid receptors in mouse CNS: role in tachyphylaxis and acute tolerance.</title>
        <authorList>
            <person name="Garzan J."/>
            <person name="Rodriguez-Munoz M."/>
            <person name="Lopez-Fando A."/>
            <person name="Garcia-Espana A."/>
            <person name="Sanchez-Blazquez P."/>
        </authorList>
    </citation>
    <scope>FUNCTION</scope>
    <scope>GLYCOSYLATION</scope>
</reference>
<reference key="5">
    <citation type="journal article" date="2005" name="Neuropsychopharmacology">
        <title>The RGSZ2 protein exists in a complex with mu-opioid receptors and regulates the desensitizing capacity of Gz proteins.</title>
        <authorList>
            <person name="Garzan J."/>
            <person name="Rodriguez-Munoz M."/>
            <person name="Lopez-Fando A."/>
            <person name="Sanchez-Blazquez P."/>
        </authorList>
    </citation>
    <scope>INTERACTION WITH OPRM1</scope>
    <scope>TISSUE SPECIFICITY</scope>
    <scope>FUNCTION</scope>
</reference>
<reference key="6">
    <citation type="journal article" date="2007" name="Neuropsychopharmacology">
        <title>Sumoylated RGS-Rz proteins act as scaffolds for mu-opioid receptors and G-protein complexes in mouse brain.</title>
        <authorList>
            <person name="Rodriguez-Munoz M."/>
            <person name="Bermudez D."/>
            <person name="Sanchez-Blazquez P."/>
            <person name="Garzon J."/>
        </authorList>
    </citation>
    <scope>SUMOYLATION</scope>
    <scope>PHOSPHORYLATION</scope>
    <scope>FUNCTION</scope>
</reference>
<keyword id="KW-0963">Cytoplasm</keyword>
<keyword id="KW-0325">Glycoprotein</keyword>
<keyword id="KW-0449">Lipoprotein</keyword>
<keyword id="KW-0472">Membrane</keyword>
<keyword id="KW-0539">Nucleus</keyword>
<keyword id="KW-0564">Palmitate</keyword>
<keyword id="KW-0597">Phosphoprotein</keyword>
<keyword id="KW-1185">Reference proteome</keyword>
<keyword id="KW-0734">Signal transduction inhibitor</keyword>
<keyword id="KW-0832">Ubl conjugation</keyword>
<gene>
    <name type="primary">Rgs20</name>
    <name type="synonym">Rgsz1</name>
</gene>
<feature type="chain" id="PRO_0000204234" description="Regulator of G-protein signaling 20">
    <location>
        <begin position="1"/>
        <end position="239"/>
    </location>
</feature>
<feature type="domain" description="RGS" evidence="2">
    <location>
        <begin position="113"/>
        <end position="229"/>
    </location>
</feature>
<feature type="region of interest" description="Disordered" evidence="3">
    <location>
        <begin position="1"/>
        <end position="29"/>
    </location>
</feature>
<feature type="compositionally biased region" description="Low complexity" evidence="3">
    <location>
        <begin position="8"/>
        <end position="19"/>
    </location>
</feature>
<feature type="sequence variant" description="In strain: BALB/c." evidence="7">
    <original>M</original>
    <variation>R</variation>
    <location>
        <position position="32"/>
    </location>
</feature>
<accession>Q9QZB1</accession>
<accession>Q14A97</accession>
<accession>Q3TY63</accession>
<accession>Q9CUV8</accession>
<accession>Q9QZB2</accession>
<dbReference type="EMBL" id="AF191554">
    <property type="protein sequence ID" value="AAF05757.1"/>
    <property type="molecule type" value="mRNA"/>
</dbReference>
<dbReference type="EMBL" id="AF191552">
    <property type="protein sequence ID" value="AAF05756.1"/>
    <property type="molecule type" value="mRNA"/>
</dbReference>
<dbReference type="EMBL" id="AK013773">
    <property type="protein sequence ID" value="BAB28987.2"/>
    <property type="status" value="ALT_INIT"/>
    <property type="molecule type" value="mRNA"/>
</dbReference>
<dbReference type="EMBL" id="AK158864">
    <property type="protein sequence ID" value="BAE34700.1"/>
    <property type="molecule type" value="mRNA"/>
</dbReference>
<dbReference type="EMBL" id="BC116925">
    <property type="protein sequence ID" value="AAI16926.1"/>
    <property type="molecule type" value="mRNA"/>
</dbReference>
<dbReference type="EMBL" id="BC116929">
    <property type="protein sequence ID" value="AAI16930.1"/>
    <property type="molecule type" value="mRNA"/>
</dbReference>
<dbReference type="CCDS" id="CCDS14807.1"/>
<dbReference type="RefSeq" id="NP_001277301.1">
    <property type="nucleotide sequence ID" value="NM_001290372.1"/>
</dbReference>
<dbReference type="RefSeq" id="NP_067349.2">
    <property type="nucleotide sequence ID" value="NM_021374.5"/>
</dbReference>
<dbReference type="RefSeq" id="XP_011236702.1">
    <property type="nucleotide sequence ID" value="XM_011238400.1"/>
</dbReference>
<dbReference type="RefSeq" id="XP_036008409.1">
    <property type="nucleotide sequence ID" value="XM_036152516.1"/>
</dbReference>
<dbReference type="SMR" id="Q9QZB1"/>
<dbReference type="BioGRID" id="208369">
    <property type="interactions" value="4"/>
</dbReference>
<dbReference type="FunCoup" id="Q9QZB1">
    <property type="interactions" value="1087"/>
</dbReference>
<dbReference type="IntAct" id="Q9QZB1">
    <property type="interactions" value="2"/>
</dbReference>
<dbReference type="MINT" id="Q9QZB1"/>
<dbReference type="STRING" id="10090.ENSMUSP00000113398"/>
<dbReference type="GlyGen" id="Q9QZB1">
    <property type="glycosylation" value="1 site"/>
</dbReference>
<dbReference type="iPTMnet" id="Q9QZB1"/>
<dbReference type="PhosphoSitePlus" id="Q9QZB1"/>
<dbReference type="SwissPalm" id="Q9QZB1"/>
<dbReference type="jPOST" id="Q9QZB1"/>
<dbReference type="PaxDb" id="10090-ENSMUSP00000113398"/>
<dbReference type="PeptideAtlas" id="Q9QZB1"/>
<dbReference type="ProteomicsDB" id="253123"/>
<dbReference type="Pumba" id="Q9QZB1"/>
<dbReference type="Antibodypedia" id="11664">
    <property type="antibodies" value="164 antibodies from 29 providers"/>
</dbReference>
<dbReference type="DNASU" id="58175"/>
<dbReference type="Ensembl" id="ENSMUST00000002533.15">
    <property type="protein sequence ID" value="ENSMUSP00000002533.9"/>
    <property type="gene ID" value="ENSMUSG00000002459.18"/>
</dbReference>
<dbReference type="GeneID" id="58175"/>
<dbReference type="KEGG" id="mmu:58175"/>
<dbReference type="UCSC" id="uc007afk.3">
    <property type="organism name" value="mouse"/>
</dbReference>
<dbReference type="AGR" id="MGI:1929866"/>
<dbReference type="CTD" id="8601"/>
<dbReference type="MGI" id="MGI:1929866">
    <property type="gene designation" value="Rgs20"/>
</dbReference>
<dbReference type="VEuPathDB" id="HostDB:ENSMUSG00000002459"/>
<dbReference type="eggNOG" id="KOG3589">
    <property type="taxonomic scope" value="Eukaryota"/>
</dbReference>
<dbReference type="GeneTree" id="ENSGT00940000159123"/>
<dbReference type="InParanoid" id="Q9QZB1"/>
<dbReference type="OMA" id="PMGSEWM"/>
<dbReference type="OrthoDB" id="10266999at2759"/>
<dbReference type="PhylomeDB" id="Q9QZB1"/>
<dbReference type="Reactome" id="R-MMU-418594">
    <property type="pathway name" value="G alpha (i) signalling events"/>
</dbReference>
<dbReference type="Reactome" id="R-MMU-418597">
    <property type="pathway name" value="G alpha (z) signalling events"/>
</dbReference>
<dbReference type="BioGRID-ORCS" id="58175">
    <property type="hits" value="2 hits in 80 CRISPR screens"/>
</dbReference>
<dbReference type="CD-CODE" id="CE726F99">
    <property type="entry name" value="Postsynaptic density"/>
</dbReference>
<dbReference type="ChiTaRS" id="Rgs20">
    <property type="organism name" value="mouse"/>
</dbReference>
<dbReference type="PRO" id="PR:Q9QZB1"/>
<dbReference type="Proteomes" id="UP000000589">
    <property type="component" value="Chromosome 1"/>
</dbReference>
<dbReference type="RNAct" id="Q9QZB1">
    <property type="molecule type" value="protein"/>
</dbReference>
<dbReference type="Bgee" id="ENSMUSG00000002459">
    <property type="expression patterns" value="Expressed in caudate-putamen and 122 other cell types or tissues"/>
</dbReference>
<dbReference type="ExpressionAtlas" id="Q9QZB1">
    <property type="expression patterns" value="baseline and differential"/>
</dbReference>
<dbReference type="GO" id="GO:0005794">
    <property type="term" value="C:Golgi apparatus"/>
    <property type="evidence" value="ECO:0000304"/>
    <property type="project" value="MGI"/>
</dbReference>
<dbReference type="GO" id="GO:0016020">
    <property type="term" value="C:membrane"/>
    <property type="evidence" value="ECO:0007669"/>
    <property type="project" value="UniProtKB-SubCell"/>
</dbReference>
<dbReference type="GO" id="GO:0005634">
    <property type="term" value="C:nucleus"/>
    <property type="evidence" value="ECO:0007669"/>
    <property type="project" value="UniProtKB-SubCell"/>
</dbReference>
<dbReference type="GO" id="GO:0005096">
    <property type="term" value="F:GTPase activator activity"/>
    <property type="evidence" value="ECO:0000304"/>
    <property type="project" value="MGI"/>
</dbReference>
<dbReference type="GO" id="GO:0007186">
    <property type="term" value="P:G protein-coupled receptor signaling pathway"/>
    <property type="evidence" value="ECO:0000304"/>
    <property type="project" value="MGI"/>
</dbReference>
<dbReference type="GO" id="GO:0009968">
    <property type="term" value="P:negative regulation of signal transduction"/>
    <property type="evidence" value="ECO:0007669"/>
    <property type="project" value="UniProtKB-KW"/>
</dbReference>
<dbReference type="FunFam" id="1.10.167.10:FF:000015">
    <property type="entry name" value="Regulator of G-protein signaling 17"/>
    <property type="match status" value="1"/>
</dbReference>
<dbReference type="FunFam" id="1.10.196.10:FF:000001">
    <property type="entry name" value="Regulator of G-protein signaling 8"/>
    <property type="match status" value="1"/>
</dbReference>
<dbReference type="Gene3D" id="1.10.167.10">
    <property type="entry name" value="Regulator of G-protein Signalling 4, domain 2"/>
    <property type="match status" value="1"/>
</dbReference>
<dbReference type="InterPro" id="IPR016137">
    <property type="entry name" value="RGS"/>
</dbReference>
<dbReference type="InterPro" id="IPR036305">
    <property type="entry name" value="RGS_sf"/>
</dbReference>
<dbReference type="InterPro" id="IPR044926">
    <property type="entry name" value="RGS_subdomain_2"/>
</dbReference>
<dbReference type="PANTHER" id="PTHR10845">
    <property type="entry name" value="REGULATOR OF G PROTEIN SIGNALING"/>
    <property type="match status" value="1"/>
</dbReference>
<dbReference type="PANTHER" id="PTHR10845:SF277">
    <property type="entry name" value="REGULATOR OF G-PROTEIN SIGNALING 20"/>
    <property type="match status" value="1"/>
</dbReference>
<dbReference type="Pfam" id="PF00615">
    <property type="entry name" value="RGS"/>
    <property type="match status" value="1"/>
</dbReference>
<dbReference type="PRINTS" id="PR01301">
    <property type="entry name" value="RGSPROTEIN"/>
</dbReference>
<dbReference type="SMART" id="SM00315">
    <property type="entry name" value="RGS"/>
    <property type="match status" value="1"/>
</dbReference>
<dbReference type="SUPFAM" id="SSF48097">
    <property type="entry name" value="Regulator of G-protein signaling, RGS"/>
    <property type="match status" value="1"/>
</dbReference>
<dbReference type="PROSITE" id="PS50132">
    <property type="entry name" value="RGS"/>
    <property type="match status" value="1"/>
</dbReference>